<accession>A6MMF8</accession>
<organism>
    <name type="scientific">Chloranthus spicatus</name>
    <name type="common">Chulantree</name>
    <name type="synonym">Nigrina spicata</name>
    <dbReference type="NCBI Taxonomy" id="13006"/>
    <lineage>
        <taxon>Eukaryota</taxon>
        <taxon>Viridiplantae</taxon>
        <taxon>Streptophyta</taxon>
        <taxon>Embryophyta</taxon>
        <taxon>Tracheophyta</taxon>
        <taxon>Spermatophyta</taxon>
        <taxon>Magnoliopsida</taxon>
        <taxon>Chloranthales</taxon>
        <taxon>Chloranthaceae</taxon>
        <taxon>Chloranthus</taxon>
    </lineage>
</organism>
<evidence type="ECO:0000250" key="1"/>
<evidence type="ECO:0000305" key="2"/>
<feature type="chain" id="PRO_0000305775" description="Small ribosomal subunit protein uS8c">
    <location>
        <begin position="1"/>
        <end position="134"/>
    </location>
</feature>
<sequence>MGKDTIADIITSIRNADMEKKGTVRIASTNINISENIVQILLREGFIENVRKHRENNKYFLVSTLRHRRNRKGAYRNILKRISRPGLRIYSNYQRIPRILGGMGIVILSTSRGIMTDREARLEGIGGEILCYIW</sequence>
<proteinExistence type="inferred from homology"/>
<geneLocation type="chloroplast"/>
<dbReference type="EMBL" id="EF380352">
    <property type="protein sequence ID" value="ABQ43295.1"/>
    <property type="molecule type" value="Genomic_DNA"/>
</dbReference>
<dbReference type="RefSeq" id="YP_001294134.1">
    <property type="nucleotide sequence ID" value="NC_009598.1"/>
</dbReference>
<dbReference type="SMR" id="A6MMF8"/>
<dbReference type="GeneID" id="5236427"/>
<dbReference type="GO" id="GO:0009507">
    <property type="term" value="C:chloroplast"/>
    <property type="evidence" value="ECO:0007669"/>
    <property type="project" value="UniProtKB-SubCell"/>
</dbReference>
<dbReference type="GO" id="GO:1990904">
    <property type="term" value="C:ribonucleoprotein complex"/>
    <property type="evidence" value="ECO:0007669"/>
    <property type="project" value="UniProtKB-KW"/>
</dbReference>
<dbReference type="GO" id="GO:0005840">
    <property type="term" value="C:ribosome"/>
    <property type="evidence" value="ECO:0007669"/>
    <property type="project" value="UniProtKB-KW"/>
</dbReference>
<dbReference type="GO" id="GO:0019843">
    <property type="term" value="F:rRNA binding"/>
    <property type="evidence" value="ECO:0007669"/>
    <property type="project" value="UniProtKB-UniRule"/>
</dbReference>
<dbReference type="GO" id="GO:0003735">
    <property type="term" value="F:structural constituent of ribosome"/>
    <property type="evidence" value="ECO:0007669"/>
    <property type="project" value="InterPro"/>
</dbReference>
<dbReference type="GO" id="GO:0006412">
    <property type="term" value="P:translation"/>
    <property type="evidence" value="ECO:0007669"/>
    <property type="project" value="UniProtKB-UniRule"/>
</dbReference>
<dbReference type="FunFam" id="3.30.1490.10:FF:000001">
    <property type="entry name" value="30S ribosomal protein S8"/>
    <property type="match status" value="1"/>
</dbReference>
<dbReference type="FunFam" id="3.30.1370.30:FF:000004">
    <property type="entry name" value="30S ribosomal protein S8, chloroplastic"/>
    <property type="match status" value="1"/>
</dbReference>
<dbReference type="Gene3D" id="3.30.1370.30">
    <property type="match status" value="1"/>
</dbReference>
<dbReference type="Gene3D" id="3.30.1490.10">
    <property type="match status" value="1"/>
</dbReference>
<dbReference type="HAMAP" id="MF_01302_B">
    <property type="entry name" value="Ribosomal_uS8_B"/>
    <property type="match status" value="1"/>
</dbReference>
<dbReference type="InterPro" id="IPR000630">
    <property type="entry name" value="Ribosomal_uS8"/>
</dbReference>
<dbReference type="InterPro" id="IPR047863">
    <property type="entry name" value="Ribosomal_uS8_CS"/>
</dbReference>
<dbReference type="InterPro" id="IPR035987">
    <property type="entry name" value="Ribosomal_uS8_sf"/>
</dbReference>
<dbReference type="NCBIfam" id="NF001109">
    <property type="entry name" value="PRK00136.1"/>
    <property type="match status" value="1"/>
</dbReference>
<dbReference type="PANTHER" id="PTHR11758">
    <property type="entry name" value="40S RIBOSOMAL PROTEIN S15A"/>
    <property type="match status" value="1"/>
</dbReference>
<dbReference type="Pfam" id="PF00410">
    <property type="entry name" value="Ribosomal_S8"/>
    <property type="match status" value="1"/>
</dbReference>
<dbReference type="SUPFAM" id="SSF56047">
    <property type="entry name" value="Ribosomal protein S8"/>
    <property type="match status" value="1"/>
</dbReference>
<dbReference type="PROSITE" id="PS00053">
    <property type="entry name" value="RIBOSOMAL_S8"/>
    <property type="match status" value="1"/>
</dbReference>
<keyword id="KW-0150">Chloroplast</keyword>
<keyword id="KW-0934">Plastid</keyword>
<keyword id="KW-0687">Ribonucleoprotein</keyword>
<keyword id="KW-0689">Ribosomal protein</keyword>
<keyword id="KW-0694">RNA-binding</keyword>
<keyword id="KW-0699">rRNA-binding</keyword>
<name>RR8_CHLSC</name>
<protein>
    <recommendedName>
        <fullName evidence="2">Small ribosomal subunit protein uS8c</fullName>
    </recommendedName>
    <alternativeName>
        <fullName>30S ribosomal protein S8, chloroplastic</fullName>
    </alternativeName>
</protein>
<comment type="function">
    <text evidence="1">One of the primary rRNA binding proteins, it binds directly to 16S rRNA central domain where it helps coordinate assembly of the platform of the 30S subunit.</text>
</comment>
<comment type="subunit">
    <text evidence="1">Part of the 30S ribosomal subunit.</text>
</comment>
<comment type="subcellular location">
    <subcellularLocation>
        <location>Plastid</location>
        <location>Chloroplast</location>
    </subcellularLocation>
</comment>
<comment type="similarity">
    <text evidence="2">Belongs to the universal ribosomal protein uS8 family.</text>
</comment>
<reference key="1">
    <citation type="journal article" date="2007" name="Mol. Phylogenet. Evol.">
        <title>Phylogenetic and evolutionary implications of complete chloroplast genome sequences of four early-diverging angiosperms: Buxus (Buxaceae), Chloranthus (Chloranthaceae), Dioscorea (Dioscoreaceae), and Illicium (Schisandraceae).</title>
        <authorList>
            <person name="Hansen D.R."/>
            <person name="Dastidar S.G."/>
            <person name="Cai Z."/>
            <person name="Penaflor C."/>
            <person name="Kuehl J.V."/>
            <person name="Boore J.L."/>
            <person name="Jansen R.K."/>
        </authorList>
    </citation>
    <scope>NUCLEOTIDE SEQUENCE [LARGE SCALE GENOMIC DNA]</scope>
</reference>
<gene>
    <name type="primary">rps8</name>
</gene>